<feature type="signal peptide" description="Tat-type signal" evidence="3">
    <location>
        <begin position="1"/>
        <end position="41"/>
    </location>
</feature>
<feature type="chain" id="PRO_0000002950" description="Copper resistance protein A">
    <location>
        <begin position="42"/>
        <end position="605"/>
    </location>
</feature>
<feature type="repeat" description="1">
    <location>
        <begin position="382"/>
        <end position="389"/>
    </location>
</feature>
<feature type="repeat" description="2">
    <location>
        <begin position="414"/>
        <end position="421"/>
    </location>
</feature>
<feature type="repeat" description="3">
    <location>
        <begin position="422"/>
        <end position="429"/>
    </location>
</feature>
<feature type="region of interest" description="3 X 8 AA tandem repeats of D-H-X-X-M-X-G-M">
    <location>
        <begin position="382"/>
        <end position="429"/>
    </location>
</feature>
<feature type="binding site" description="type 2 copper site" evidence="1">
    <location>
        <position position="100"/>
    </location>
    <ligand>
        <name>Cu cation</name>
        <dbReference type="ChEBI" id="CHEBI:23378"/>
        <label>1</label>
    </ligand>
</feature>
<feature type="binding site" description="type 3 copper site" evidence="1">
    <location>
        <position position="102"/>
    </location>
    <ligand>
        <name>Cu cation</name>
        <dbReference type="ChEBI" id="CHEBI:23378"/>
        <label>2</label>
    </ligand>
</feature>
<feature type="binding site" description="type 3 copper site" evidence="1">
    <location>
        <position position="142"/>
    </location>
    <ligand>
        <name>Cu cation</name>
        <dbReference type="ChEBI" id="CHEBI:23378"/>
        <label>2</label>
    </ligand>
</feature>
<feature type="binding site" description="type 3 copper site" evidence="1">
    <location>
        <position position="144"/>
    </location>
    <ligand>
        <name>Cu cation</name>
        <dbReference type="ChEBI" id="CHEBI:23378"/>
        <label>3</label>
    </ligand>
</feature>
<feature type="binding site" description="type 1 copper site" evidence="2">
    <location>
        <position position="538"/>
    </location>
    <ligand>
        <name>Cu cation</name>
        <dbReference type="ChEBI" id="CHEBI:23378"/>
        <label>4</label>
    </ligand>
</feature>
<feature type="binding site" description="type 2 copper site" evidence="2">
    <location>
        <position position="541"/>
    </location>
    <ligand>
        <name>Cu cation</name>
        <dbReference type="ChEBI" id="CHEBI:23378"/>
        <label>1</label>
    </ligand>
</feature>
<feature type="binding site" description="type 3 copper site" evidence="2">
    <location>
        <position position="543"/>
    </location>
    <ligand>
        <name>Cu cation</name>
        <dbReference type="ChEBI" id="CHEBI:23378"/>
        <label>3</label>
    </ligand>
</feature>
<feature type="binding site" description="type 3 copper site" evidence="2">
    <location>
        <position position="586"/>
    </location>
    <ligand>
        <name>Cu cation</name>
        <dbReference type="ChEBI" id="CHEBI:23378"/>
        <label>3</label>
    </ligand>
</feature>
<feature type="binding site" description="type 1 copper site" evidence="2">
    <location>
        <position position="587"/>
    </location>
    <ligand>
        <name>Cu cation</name>
        <dbReference type="ChEBI" id="CHEBI:23378"/>
        <label>4</label>
    </ligand>
</feature>
<feature type="binding site" description="type 3 copper site" evidence="2">
    <location>
        <position position="588"/>
    </location>
    <ligand>
        <name>Cu cation</name>
        <dbReference type="ChEBI" id="CHEBI:23378"/>
        <label>2</label>
    </ligand>
</feature>
<feature type="binding site" description="type 1 copper site" evidence="2">
    <location>
        <position position="592"/>
    </location>
    <ligand>
        <name>Cu cation</name>
        <dbReference type="ChEBI" id="CHEBI:23378"/>
        <label>4</label>
    </ligand>
</feature>
<feature type="binding site" description="type 1 copper site" evidence="2">
    <location>
        <position position="597"/>
    </location>
    <ligand>
        <name>Cu cation</name>
        <dbReference type="ChEBI" id="CHEBI:23378"/>
        <label>4</label>
    </ligand>
</feature>
<proteinExistence type="inferred from homology"/>
<name>PCOA_ECOLX</name>
<geneLocation type="plasmid">
    <name>pRJ1004</name>
</geneLocation>
<gene>
    <name type="primary">pcoA</name>
</gene>
<dbReference type="EMBL" id="X83541">
    <property type="protein sequence ID" value="CAA58525.1"/>
    <property type="molecule type" value="Genomic_DNA"/>
</dbReference>
<dbReference type="PIR" id="S70159">
    <property type="entry name" value="S52253"/>
</dbReference>
<dbReference type="RefSeq" id="WP_000925242.1">
    <property type="nucleotide sequence ID" value="NZ_WVVM01000015.1"/>
</dbReference>
<dbReference type="SMR" id="Q47452"/>
<dbReference type="GeneID" id="92830457"/>
<dbReference type="eggNOG" id="COG2132">
    <property type="taxonomic scope" value="Bacteria"/>
</dbReference>
<dbReference type="OMA" id="DHSKMAM"/>
<dbReference type="GO" id="GO:0042597">
    <property type="term" value="C:periplasmic space"/>
    <property type="evidence" value="ECO:0007669"/>
    <property type="project" value="UniProtKB-SubCell"/>
</dbReference>
<dbReference type="GO" id="GO:0005507">
    <property type="term" value="F:copper ion binding"/>
    <property type="evidence" value="ECO:0007669"/>
    <property type="project" value="InterPro"/>
</dbReference>
<dbReference type="GO" id="GO:0016491">
    <property type="term" value="F:oxidoreductase activity"/>
    <property type="evidence" value="ECO:0007669"/>
    <property type="project" value="UniProtKB-KW"/>
</dbReference>
<dbReference type="CDD" id="cd13848">
    <property type="entry name" value="CuRO_1_CopA"/>
    <property type="match status" value="1"/>
</dbReference>
<dbReference type="CDD" id="cd13874">
    <property type="entry name" value="CuRO_2_CopA"/>
    <property type="match status" value="1"/>
</dbReference>
<dbReference type="CDD" id="cd13896">
    <property type="entry name" value="CuRO_3_CopA"/>
    <property type="match status" value="1"/>
</dbReference>
<dbReference type="Gene3D" id="2.60.40.420">
    <property type="entry name" value="Cupredoxins - blue copper proteins"/>
    <property type="match status" value="3"/>
</dbReference>
<dbReference type="InterPro" id="IPR011707">
    <property type="entry name" value="Cu-oxidase-like_N"/>
</dbReference>
<dbReference type="InterPro" id="IPR001117">
    <property type="entry name" value="Cu-oxidase_2nd"/>
</dbReference>
<dbReference type="InterPro" id="IPR011706">
    <property type="entry name" value="Cu-oxidase_C"/>
</dbReference>
<dbReference type="InterPro" id="IPR045087">
    <property type="entry name" value="Cu-oxidase_fam"/>
</dbReference>
<dbReference type="InterPro" id="IPR006376">
    <property type="entry name" value="Cu-R_CopA"/>
</dbReference>
<dbReference type="InterPro" id="IPR033138">
    <property type="entry name" value="Cu_oxidase_CS"/>
</dbReference>
<dbReference type="InterPro" id="IPR002355">
    <property type="entry name" value="Cu_oxidase_Cu_BS"/>
</dbReference>
<dbReference type="InterPro" id="IPR008972">
    <property type="entry name" value="Cupredoxin"/>
</dbReference>
<dbReference type="InterPro" id="IPR034284">
    <property type="entry name" value="CuRO_1_CopA"/>
</dbReference>
<dbReference type="InterPro" id="IPR034282">
    <property type="entry name" value="CuRO_2_CopA"/>
</dbReference>
<dbReference type="InterPro" id="IPR034279">
    <property type="entry name" value="CuRO_3_CopA"/>
</dbReference>
<dbReference type="InterPro" id="IPR006311">
    <property type="entry name" value="TAT_signal"/>
</dbReference>
<dbReference type="InterPro" id="IPR019546">
    <property type="entry name" value="TAT_signal_bac_arc"/>
</dbReference>
<dbReference type="NCBIfam" id="TIGR01480">
    <property type="entry name" value="copper_res_A"/>
    <property type="match status" value="1"/>
</dbReference>
<dbReference type="NCBIfam" id="TIGR01409">
    <property type="entry name" value="TAT_signal_seq"/>
    <property type="match status" value="1"/>
</dbReference>
<dbReference type="PANTHER" id="PTHR11709:SF394">
    <property type="entry name" value="FI03373P-RELATED"/>
    <property type="match status" value="1"/>
</dbReference>
<dbReference type="PANTHER" id="PTHR11709">
    <property type="entry name" value="MULTI-COPPER OXIDASE"/>
    <property type="match status" value="1"/>
</dbReference>
<dbReference type="Pfam" id="PF00394">
    <property type="entry name" value="Cu-oxidase"/>
    <property type="match status" value="1"/>
</dbReference>
<dbReference type="Pfam" id="PF07731">
    <property type="entry name" value="Cu-oxidase_2"/>
    <property type="match status" value="1"/>
</dbReference>
<dbReference type="Pfam" id="PF07732">
    <property type="entry name" value="Cu-oxidase_3"/>
    <property type="match status" value="1"/>
</dbReference>
<dbReference type="SUPFAM" id="SSF49503">
    <property type="entry name" value="Cupredoxins"/>
    <property type="match status" value="3"/>
</dbReference>
<dbReference type="PROSITE" id="PS00079">
    <property type="entry name" value="MULTICOPPER_OXIDASE1"/>
    <property type="match status" value="1"/>
</dbReference>
<dbReference type="PROSITE" id="PS00080">
    <property type="entry name" value="MULTICOPPER_OXIDASE2"/>
    <property type="match status" value="1"/>
</dbReference>
<dbReference type="PROSITE" id="PS51318">
    <property type="entry name" value="TAT"/>
    <property type="match status" value="1"/>
</dbReference>
<keyword id="KW-0186">Copper</keyword>
<keyword id="KW-0479">Metal-binding</keyword>
<keyword id="KW-0560">Oxidoreductase</keyword>
<keyword id="KW-0574">Periplasm</keyword>
<keyword id="KW-0614">Plasmid</keyword>
<keyword id="KW-0677">Repeat</keyword>
<keyword id="KW-0732">Signal</keyword>
<comment type="function">
    <text evidence="1">Required for the copper-inducible expression of copper resistance. May have oxidase activity (By similarity).</text>
</comment>
<comment type="subcellular location">
    <subcellularLocation>
        <location evidence="4">Periplasm</location>
    </subcellularLocation>
</comment>
<comment type="PTM">
    <text>Predicted to be exported by the Tat system. The position of the signal peptide cleavage has not been experimentally proven.</text>
</comment>
<comment type="similarity">
    <text evidence="4">Belongs to the multicopper oxidase family. CopA subfamily.</text>
</comment>
<reference key="1">
    <citation type="journal article" date="1995" name="Mol. Microbiol.">
        <title>Molecular genetics and transport analysis of the copper-resistance determinant (pco) from Escherichia coli plasmid pRJ1004.</title>
        <authorList>
            <person name="Brown N.L."/>
            <person name="Barrett S.R."/>
            <person name="Camakaris J."/>
            <person name="Lee B.T.O."/>
            <person name="Rouch D.A."/>
        </authorList>
    </citation>
    <scope>NUCLEOTIDE SEQUENCE [GENOMIC DNA]</scope>
</reference>
<sequence length="605" mass="67307">MLLKTSRRTFLKGLTLSGVAGSLGVWSFNARSSLSLPVAASLQGTQFDLTIGETAVNITGSERQAKTINGGLPGPVLRWKEGDTITLKVKNRLNEQTSIHWHGIILPANMDGVPGLSFMGIEPDDTYVYTFKVKQNGTYWYHSHSGLQEQEGVYGAIIIDAREPEPFAYDREHVVMLSDWTDENPHSLLKKLKKQSDYYNFNKPTVGSFFRDVNTRGLSATIADRKMWAEMKMNPTDLADVSGYTYTYLMNGQAPLKNWTGLFRPGEKIRLRFINGSAMTYFDIRIPGLKMTVVAADGQYVNPVTVDEFRIAVAETYDVIVEPQGEAYTIFAQSMDRTGYARGTLATREGLSAAVPPLDPRPLLTMEDMGMGGMGHDMAGMDHSQMGGMDNSGEMMSMDGADLPDSGTSSAPMDHSSMAGMDHSRMAGMPGMQSHPASETDNPLVDMQAMSVSPKLNDPGIGLRNNGRKVLTYADLKSRFEDPDGREPGRTIELHLTGHMEKFAWSFNGIKFSDAAPVLLKYGERLRITLINDTMMTHPIHLHGMWSDLEDENGNFMVRKHTIDVPPGTKRSYRVTADALGRWAYHCHLLYHMEMGMFREVRVEE</sequence>
<protein>
    <recommendedName>
        <fullName>Copper resistance protein A</fullName>
    </recommendedName>
</protein>
<organism>
    <name type="scientific">Escherichia coli</name>
    <dbReference type="NCBI Taxonomy" id="562"/>
    <lineage>
        <taxon>Bacteria</taxon>
        <taxon>Pseudomonadati</taxon>
        <taxon>Pseudomonadota</taxon>
        <taxon>Gammaproteobacteria</taxon>
        <taxon>Enterobacterales</taxon>
        <taxon>Enterobacteriaceae</taxon>
        <taxon>Escherichia</taxon>
    </lineage>
</organism>
<accession>Q47452</accession>
<evidence type="ECO:0000250" key="1"/>
<evidence type="ECO:0000255" key="2"/>
<evidence type="ECO:0000255" key="3">
    <source>
        <dbReference type="PROSITE-ProRule" id="PRU00648"/>
    </source>
</evidence>
<evidence type="ECO:0000305" key="4"/>